<dbReference type="EC" id="2.1.1.364" evidence="2 4"/>
<dbReference type="EMBL" id="BC076014">
    <property type="protein sequence ID" value="AAH76014.1"/>
    <property type="molecule type" value="mRNA"/>
</dbReference>
<dbReference type="RefSeq" id="NP_001002456.1">
    <property type="nucleotide sequence ID" value="NM_001002456.1"/>
</dbReference>
<dbReference type="SMR" id="Q6DHG0"/>
<dbReference type="FunCoup" id="Q6DHG0">
    <property type="interactions" value="465"/>
</dbReference>
<dbReference type="STRING" id="7955.ENSDARP00000056733"/>
<dbReference type="PaxDb" id="7955-ENSDARP00000056733"/>
<dbReference type="GeneID" id="436729"/>
<dbReference type="KEGG" id="dre:436729"/>
<dbReference type="AGR" id="ZFIN:ZDB-GENE-040718-156"/>
<dbReference type="CTD" id="80854"/>
<dbReference type="ZFIN" id="ZDB-GENE-040718-156">
    <property type="gene designation" value="setd7"/>
</dbReference>
<dbReference type="eggNOG" id="KOG1079">
    <property type="taxonomic scope" value="Eukaryota"/>
</dbReference>
<dbReference type="InParanoid" id="Q6DHG0"/>
<dbReference type="OrthoDB" id="294378at2759"/>
<dbReference type="PhylomeDB" id="Q6DHG0"/>
<dbReference type="BRENDA" id="2.1.1.354">
    <property type="organism ID" value="928"/>
</dbReference>
<dbReference type="PRO" id="PR:Q6DHG0"/>
<dbReference type="Proteomes" id="UP000000437">
    <property type="component" value="Chromosome 14"/>
</dbReference>
<dbReference type="GO" id="GO:0005694">
    <property type="term" value="C:chromosome"/>
    <property type="evidence" value="ECO:0000318"/>
    <property type="project" value="GO_Central"/>
</dbReference>
<dbReference type="GO" id="GO:0005634">
    <property type="term" value="C:nucleus"/>
    <property type="evidence" value="ECO:0000318"/>
    <property type="project" value="GO_Central"/>
</dbReference>
<dbReference type="GO" id="GO:0140938">
    <property type="term" value="F:histone H3 methyltransferase activity"/>
    <property type="evidence" value="ECO:0000318"/>
    <property type="project" value="GO_Central"/>
</dbReference>
<dbReference type="GO" id="GO:0140945">
    <property type="term" value="F:histone H3K4 monomethyltransferase activity"/>
    <property type="evidence" value="ECO:0007669"/>
    <property type="project" value="UniProtKB-EC"/>
</dbReference>
<dbReference type="GO" id="GO:0042054">
    <property type="term" value="F:histone methyltransferase activity"/>
    <property type="evidence" value="ECO:0000250"/>
    <property type="project" value="UniProtKB"/>
</dbReference>
<dbReference type="GO" id="GO:0016279">
    <property type="term" value="F:protein-lysine N-methyltransferase activity"/>
    <property type="evidence" value="ECO:0000250"/>
    <property type="project" value="UniProtKB"/>
</dbReference>
<dbReference type="GO" id="GO:0003007">
    <property type="term" value="P:heart morphogenesis"/>
    <property type="evidence" value="ECO:0000315"/>
    <property type="project" value="ZFIN"/>
</dbReference>
<dbReference type="GO" id="GO:0070828">
    <property type="term" value="P:heterochromatin organization"/>
    <property type="evidence" value="ECO:0000318"/>
    <property type="project" value="GO_Central"/>
</dbReference>
<dbReference type="GO" id="GO:0018027">
    <property type="term" value="P:peptidyl-lysine dimethylation"/>
    <property type="evidence" value="ECO:0000250"/>
    <property type="project" value="UniProtKB"/>
</dbReference>
<dbReference type="GO" id="GO:0018026">
    <property type="term" value="P:peptidyl-lysine monomethylation"/>
    <property type="evidence" value="ECO:0000250"/>
    <property type="project" value="UniProtKB"/>
</dbReference>
<dbReference type="GO" id="GO:0045893">
    <property type="term" value="P:positive regulation of DNA-templated transcription"/>
    <property type="evidence" value="ECO:0000318"/>
    <property type="project" value="GO_Central"/>
</dbReference>
<dbReference type="CDD" id="cd10530">
    <property type="entry name" value="SET_SETD7"/>
    <property type="match status" value="1"/>
</dbReference>
<dbReference type="FunFam" id="2.170.270.10:FF:000024">
    <property type="entry name" value="Histone-lysine N-methyltransferase SETD7"/>
    <property type="match status" value="1"/>
</dbReference>
<dbReference type="FunFam" id="2.20.110.10:FF:000004">
    <property type="entry name" value="Histone-lysine N-methyltransferase SETD7"/>
    <property type="match status" value="1"/>
</dbReference>
<dbReference type="FunFam" id="2.20.110.10:FF:000005">
    <property type="entry name" value="Histone-lysine N-methyltransferase SETD7"/>
    <property type="match status" value="1"/>
</dbReference>
<dbReference type="Gene3D" id="2.20.110.10">
    <property type="entry name" value="Histone H3 K4-specific methyltransferase SET7/9 N-terminal domain"/>
    <property type="match status" value="3"/>
</dbReference>
<dbReference type="Gene3D" id="2.170.270.10">
    <property type="entry name" value="SET domain"/>
    <property type="match status" value="1"/>
</dbReference>
<dbReference type="InterPro" id="IPR017155">
    <property type="entry name" value="Hist-Lys_N-MeTrfase_SETD7"/>
</dbReference>
<dbReference type="InterPro" id="IPR003409">
    <property type="entry name" value="MORN"/>
</dbReference>
<dbReference type="InterPro" id="IPR001214">
    <property type="entry name" value="SET_dom"/>
</dbReference>
<dbReference type="InterPro" id="IPR046341">
    <property type="entry name" value="SET_dom_sf"/>
</dbReference>
<dbReference type="InterPro" id="IPR054533">
    <property type="entry name" value="SETD7_N"/>
</dbReference>
<dbReference type="InterPro" id="IPR044436">
    <property type="entry name" value="SETD7_SET"/>
</dbReference>
<dbReference type="PANTHER" id="PTHR46820">
    <property type="entry name" value="HISTONE-LYSINE N-METHYLTRANSFERASE SETD7"/>
    <property type="match status" value="1"/>
</dbReference>
<dbReference type="PANTHER" id="PTHR46820:SF1">
    <property type="entry name" value="HISTONE-LYSINE N-METHYLTRANSFERASE SETD7"/>
    <property type="match status" value="1"/>
</dbReference>
<dbReference type="Pfam" id="PF02493">
    <property type="entry name" value="MORN"/>
    <property type="match status" value="3"/>
</dbReference>
<dbReference type="Pfam" id="PF00856">
    <property type="entry name" value="SET"/>
    <property type="match status" value="1"/>
</dbReference>
<dbReference type="Pfam" id="PF22648">
    <property type="entry name" value="SET7_N"/>
    <property type="match status" value="1"/>
</dbReference>
<dbReference type="PIRSF" id="PIRSF037249">
    <property type="entry name" value="Histone_Lys_mtfrase_SET"/>
    <property type="match status" value="1"/>
</dbReference>
<dbReference type="SMART" id="SM00317">
    <property type="entry name" value="SET"/>
    <property type="match status" value="1"/>
</dbReference>
<dbReference type="SUPFAM" id="SSF82185">
    <property type="entry name" value="Histone H3 K4-specific methyltransferase SET7/9 N-terminal domain"/>
    <property type="match status" value="1"/>
</dbReference>
<dbReference type="SUPFAM" id="SSF82199">
    <property type="entry name" value="SET domain"/>
    <property type="match status" value="1"/>
</dbReference>
<dbReference type="PROSITE" id="PS51577">
    <property type="entry name" value="SAM_MT43_SET7"/>
    <property type="match status" value="1"/>
</dbReference>
<dbReference type="PROSITE" id="PS50280">
    <property type="entry name" value="SET"/>
    <property type="match status" value="1"/>
</dbReference>
<gene>
    <name type="primary">setd7</name>
    <name type="ORF">zgc:92330</name>
</gene>
<evidence type="ECO:0000250" key="1">
    <source>
        <dbReference type="UniProtKB" id="Q8VHL1"/>
    </source>
</evidence>
<evidence type="ECO:0000250" key="2">
    <source>
        <dbReference type="UniProtKB" id="Q8WTS6"/>
    </source>
</evidence>
<evidence type="ECO:0000255" key="3">
    <source>
        <dbReference type="PROSITE-ProRule" id="PRU00190"/>
    </source>
</evidence>
<evidence type="ECO:0000255" key="4">
    <source>
        <dbReference type="PROSITE-ProRule" id="PRU00910"/>
    </source>
</evidence>
<evidence type="ECO:0000256" key="5">
    <source>
        <dbReference type="SAM" id="MobiDB-lite"/>
    </source>
</evidence>
<accession>Q6DHG0</accession>
<keyword id="KW-0010">Activator</keyword>
<keyword id="KW-0156">Chromatin regulator</keyword>
<keyword id="KW-0158">Chromosome</keyword>
<keyword id="KW-0489">Methyltransferase</keyword>
<keyword id="KW-0539">Nucleus</keyword>
<keyword id="KW-1185">Reference proteome</keyword>
<keyword id="KW-0677">Repeat</keyword>
<keyword id="KW-0949">S-adenosyl-L-methionine</keyword>
<keyword id="KW-0804">Transcription</keyword>
<keyword id="KW-0805">Transcription regulation</keyword>
<keyword id="KW-0808">Transferase</keyword>
<protein>
    <recommendedName>
        <fullName>Histone-lysine N-methyltransferase SETD7</fullName>
        <ecNumber evidence="2 4">2.1.1.364</ecNumber>
    </recommendedName>
    <alternativeName>
        <fullName>SET domain-containing protein 7</fullName>
    </alternativeName>
</protein>
<sequence>MDSDDDNMEEVVEGPLDEDDQPHGFCTVTYSSSDRFEGHFVHGEKNGKGKFFFFDGSTLEGFYVDDALQGQGVYTYEDGGALHGFYVDGELNGPAQEFNSDGQLVFRGRYKDNIRYGMCWVYYPDGACVVGEVNEEGEMTGKAVAYVYPDGRTALYGSFVDGELIEARLATLTTQENGRPHFTVDPDSPIYCYDKSTSSCIAGHKLLPDPYESQRVYVGQSLISGAGEGLFAQTEAEANTVMAFYNGVRITHTEVDSRDWSMNGNTISLDEDTVIDVPAPFNMTENYCGSLGHKANHSFSPNCKYDQYVHPRFGQIKCIRTIRAVEKDEELTVAYGYDHEPSGKSGPEAPEWYTKQFLEFQQRESGKGADETC</sequence>
<comment type="function">
    <text evidence="2">Histone methyltransferase that specifically monomethylates 'Lys-4' of histone H3. H3 'Lys-4' methylation represents a specific tag for epigenetic transcriptional activation. Plays a central role in the transcriptional activation of genes. Also has methyltransferase activity toward non-histone proteins.</text>
</comment>
<comment type="catalytic activity">
    <reaction evidence="2 4">
        <text>L-lysyl(4)-[histone H3] + S-adenosyl-L-methionine = N(6)-methyl-L-lysyl(4)-[histone H3] + S-adenosyl-L-homocysteine + H(+)</text>
        <dbReference type="Rhea" id="RHEA:60264"/>
        <dbReference type="Rhea" id="RHEA-COMP:15543"/>
        <dbReference type="Rhea" id="RHEA-COMP:15547"/>
        <dbReference type="ChEBI" id="CHEBI:15378"/>
        <dbReference type="ChEBI" id="CHEBI:29969"/>
        <dbReference type="ChEBI" id="CHEBI:57856"/>
        <dbReference type="ChEBI" id="CHEBI:59789"/>
        <dbReference type="ChEBI" id="CHEBI:61929"/>
        <dbReference type="EC" id="2.1.1.364"/>
    </reaction>
</comment>
<comment type="catalytic activity">
    <reaction evidence="1">
        <text>L-lysyl-[protein] + S-adenosyl-L-methionine = N(6)-methyl-L-lysyl-[protein] + S-adenosyl-L-homocysteine + H(+)</text>
        <dbReference type="Rhea" id="RHEA:51736"/>
        <dbReference type="Rhea" id="RHEA-COMP:9752"/>
        <dbReference type="Rhea" id="RHEA-COMP:13053"/>
        <dbReference type="ChEBI" id="CHEBI:15378"/>
        <dbReference type="ChEBI" id="CHEBI:29969"/>
        <dbReference type="ChEBI" id="CHEBI:57856"/>
        <dbReference type="ChEBI" id="CHEBI:59789"/>
        <dbReference type="ChEBI" id="CHEBI:61929"/>
    </reaction>
    <physiologicalReaction direction="left-to-right" evidence="1">
        <dbReference type="Rhea" id="RHEA:51737"/>
    </physiologicalReaction>
</comment>
<comment type="subcellular location">
    <subcellularLocation>
        <location evidence="2">Nucleus</location>
    </subcellularLocation>
    <subcellularLocation>
        <location evidence="2">Chromosome</location>
    </subcellularLocation>
</comment>
<comment type="domain">
    <text evidence="2">The SET domain is necessary but not sufficient for histone methyltransferase activity.</text>
</comment>
<comment type="similarity">
    <text evidence="4">Belongs to the class V-like SAM-binding methyltransferase superfamily. Histone-lysine methyltransferase family. SET7 subfamily.</text>
</comment>
<name>SETD7_DANRE</name>
<proteinExistence type="evidence at transcript level"/>
<organism>
    <name type="scientific">Danio rerio</name>
    <name type="common">Zebrafish</name>
    <name type="synonym">Brachydanio rerio</name>
    <dbReference type="NCBI Taxonomy" id="7955"/>
    <lineage>
        <taxon>Eukaryota</taxon>
        <taxon>Metazoa</taxon>
        <taxon>Chordata</taxon>
        <taxon>Craniata</taxon>
        <taxon>Vertebrata</taxon>
        <taxon>Euteleostomi</taxon>
        <taxon>Actinopterygii</taxon>
        <taxon>Neopterygii</taxon>
        <taxon>Teleostei</taxon>
        <taxon>Ostariophysi</taxon>
        <taxon>Cypriniformes</taxon>
        <taxon>Danionidae</taxon>
        <taxon>Danioninae</taxon>
        <taxon>Danio</taxon>
    </lineage>
</organism>
<reference key="1">
    <citation type="submission" date="2004-07" db="EMBL/GenBank/DDBJ databases">
        <authorList>
            <consortium name="NIH - Zebrafish Gene Collection (ZGC) project"/>
        </authorList>
    </citation>
    <scope>NUCLEOTIDE SEQUENCE [LARGE SCALE MRNA]</scope>
</reference>
<feature type="chain" id="PRO_0000316990" description="Histone-lysine N-methyltransferase SETD7">
    <location>
        <begin position="1"/>
        <end position="373"/>
    </location>
</feature>
<feature type="repeat" description="MORN 1">
    <location>
        <begin position="36"/>
        <end position="58"/>
    </location>
</feature>
<feature type="repeat" description="MORN 2">
    <location>
        <begin position="59"/>
        <end position="81"/>
    </location>
</feature>
<feature type="repeat" description="MORN 3">
    <location>
        <begin position="106"/>
        <end position="128"/>
    </location>
</feature>
<feature type="domain" description="SET" evidence="3">
    <location>
        <begin position="214"/>
        <end position="336"/>
    </location>
</feature>
<feature type="region of interest" description="Disordered" evidence="5">
    <location>
        <begin position="1"/>
        <end position="20"/>
    </location>
</feature>
<feature type="binding site" evidence="2">
    <location>
        <begin position="226"/>
        <end position="228"/>
    </location>
    <ligand>
        <name>S-adenosyl-L-methionine</name>
        <dbReference type="ChEBI" id="CHEBI:59789"/>
    </ligand>
</feature>
<feature type="binding site" evidence="2">
    <location>
        <position position="296"/>
    </location>
    <ligand>
        <name>S-adenosyl-L-methionine</name>
        <dbReference type="ChEBI" id="CHEBI:59789"/>
    </ligand>
</feature>
<feature type="binding site" evidence="2">
    <location>
        <position position="297"/>
    </location>
    <ligand>
        <name>S-adenosyl-L-methionine</name>
        <dbReference type="ChEBI" id="CHEBI:59789"/>
    </ligand>
</feature>
<feature type="site" description="Histone H3K4 binding" evidence="2">
    <location>
        <position position="245"/>
    </location>
</feature>
<feature type="site" description="Histone H3K4 binding" evidence="2">
    <location>
        <position position="256"/>
    </location>
</feature>
<feature type="site" description="Histone H3K4 binding" evidence="2">
    <location>
        <position position="266"/>
    </location>
</feature>
<feature type="site" description="Histone H3K4 binding" evidence="2">
    <location>
        <position position="317"/>
    </location>
</feature>
<feature type="site" description="Histone H3K4 binding" evidence="2">
    <location>
        <position position="335"/>
    </location>
</feature>